<accession>C3NMY2</accession>
<protein>
    <recommendedName>
        <fullName evidence="1">Methylated-DNA--protein-cysteine methyltransferase</fullName>
        <ecNumber evidence="1">2.1.1.63</ecNumber>
    </recommendedName>
    <alternativeName>
        <fullName evidence="1">6-O-methylguanine-DNA methyltransferase</fullName>
        <shortName evidence="1">MGMT</shortName>
    </alternativeName>
    <alternativeName>
        <fullName evidence="1">O-6-methylguanine-DNA-alkyltransferase</fullName>
    </alternativeName>
</protein>
<proteinExistence type="inferred from homology"/>
<feature type="chain" id="PRO_1000212905" description="Methylated-DNA--protein-cysteine methyltransferase">
    <location>
        <begin position="1"/>
        <end position="151"/>
    </location>
</feature>
<feature type="active site" description="Nucleophile; methyl group acceptor" evidence="1">
    <location>
        <position position="119"/>
    </location>
</feature>
<gene>
    <name evidence="1" type="primary">ogt</name>
    <name type="ordered locus">YN1551_2888</name>
</gene>
<keyword id="KW-0963">Cytoplasm</keyword>
<keyword id="KW-0227">DNA damage</keyword>
<keyword id="KW-0234">DNA repair</keyword>
<keyword id="KW-0489">Methyltransferase</keyword>
<keyword id="KW-0808">Transferase</keyword>
<organism>
    <name type="scientific">Saccharolobus islandicus (strain Y.N.15.51 / Yellowstone #2)</name>
    <name type="common">Sulfolobus islandicus</name>
    <dbReference type="NCBI Taxonomy" id="419942"/>
    <lineage>
        <taxon>Archaea</taxon>
        <taxon>Thermoproteota</taxon>
        <taxon>Thermoprotei</taxon>
        <taxon>Sulfolobales</taxon>
        <taxon>Sulfolobaceae</taxon>
        <taxon>Saccharolobus</taxon>
    </lineage>
</organism>
<comment type="function">
    <text evidence="1">Involved in the cellular defense against the biological effects of O6-methylguanine (O6-MeG) and O4-methylthymine (O4-MeT) in DNA. Repairs the methylated nucleobase in DNA by stoichiometrically transferring the methyl group to a cysteine residue in the enzyme. This is a suicide reaction: the enzyme is irreversibly inactivated.</text>
</comment>
<comment type="catalytic activity">
    <reaction evidence="1">
        <text>a 6-O-methyl-2'-deoxyguanosine in DNA + L-cysteinyl-[protein] = S-methyl-L-cysteinyl-[protein] + a 2'-deoxyguanosine in DNA</text>
        <dbReference type="Rhea" id="RHEA:24000"/>
        <dbReference type="Rhea" id="RHEA-COMP:10131"/>
        <dbReference type="Rhea" id="RHEA-COMP:10132"/>
        <dbReference type="Rhea" id="RHEA-COMP:11367"/>
        <dbReference type="Rhea" id="RHEA-COMP:11368"/>
        <dbReference type="ChEBI" id="CHEBI:29950"/>
        <dbReference type="ChEBI" id="CHEBI:82612"/>
        <dbReference type="ChEBI" id="CHEBI:85445"/>
        <dbReference type="ChEBI" id="CHEBI:85448"/>
        <dbReference type="EC" id="2.1.1.63"/>
    </reaction>
</comment>
<comment type="catalytic activity">
    <reaction evidence="1">
        <text>a 4-O-methyl-thymidine in DNA + L-cysteinyl-[protein] = a thymidine in DNA + S-methyl-L-cysteinyl-[protein]</text>
        <dbReference type="Rhea" id="RHEA:53428"/>
        <dbReference type="Rhea" id="RHEA-COMP:10131"/>
        <dbReference type="Rhea" id="RHEA-COMP:10132"/>
        <dbReference type="Rhea" id="RHEA-COMP:13555"/>
        <dbReference type="Rhea" id="RHEA-COMP:13556"/>
        <dbReference type="ChEBI" id="CHEBI:29950"/>
        <dbReference type="ChEBI" id="CHEBI:82612"/>
        <dbReference type="ChEBI" id="CHEBI:137386"/>
        <dbReference type="ChEBI" id="CHEBI:137387"/>
        <dbReference type="EC" id="2.1.1.63"/>
    </reaction>
</comment>
<comment type="subcellular location">
    <subcellularLocation>
        <location evidence="1">Cytoplasm</location>
    </subcellularLocation>
</comment>
<comment type="miscellaneous">
    <text>This enzyme catalyzes only one turnover and therefore is not strictly catalytic. According to one definition, an enzyme is a biocatalyst that acts repeatedly and over many reaction cycles.</text>
</comment>
<comment type="similarity">
    <text evidence="1">Belongs to the MGMT family.</text>
</comment>
<dbReference type="EC" id="2.1.1.63" evidence="1"/>
<dbReference type="EMBL" id="CP001404">
    <property type="protein sequence ID" value="ACP49789.1"/>
    <property type="molecule type" value="Genomic_DNA"/>
</dbReference>
<dbReference type="RefSeq" id="WP_012718143.1">
    <property type="nucleotide sequence ID" value="NC_012623.1"/>
</dbReference>
<dbReference type="SMR" id="C3NMY2"/>
<dbReference type="GeneID" id="7808881"/>
<dbReference type="KEGG" id="sin:YN1551_2888"/>
<dbReference type="HOGENOM" id="CLU_000445_52_2_2"/>
<dbReference type="Proteomes" id="UP000006818">
    <property type="component" value="Chromosome"/>
</dbReference>
<dbReference type="GO" id="GO:0005737">
    <property type="term" value="C:cytoplasm"/>
    <property type="evidence" value="ECO:0007669"/>
    <property type="project" value="UniProtKB-SubCell"/>
</dbReference>
<dbReference type="GO" id="GO:0003908">
    <property type="term" value="F:methylated-DNA-[protein]-cysteine S-methyltransferase activity"/>
    <property type="evidence" value="ECO:0007669"/>
    <property type="project" value="UniProtKB-UniRule"/>
</dbReference>
<dbReference type="GO" id="GO:0006307">
    <property type="term" value="P:DNA alkylation repair"/>
    <property type="evidence" value="ECO:0007669"/>
    <property type="project" value="UniProtKB-UniRule"/>
</dbReference>
<dbReference type="GO" id="GO:0032259">
    <property type="term" value="P:methylation"/>
    <property type="evidence" value="ECO:0007669"/>
    <property type="project" value="UniProtKB-KW"/>
</dbReference>
<dbReference type="CDD" id="cd06445">
    <property type="entry name" value="ATase"/>
    <property type="match status" value="1"/>
</dbReference>
<dbReference type="FunFam" id="1.10.10.10:FF:000214">
    <property type="entry name" value="Methylated-DNA--protein-cysteine methyltransferase"/>
    <property type="match status" value="1"/>
</dbReference>
<dbReference type="Gene3D" id="3.30.160.70">
    <property type="entry name" value="Methylated DNA-protein cysteine methyltransferase domain"/>
    <property type="match status" value="1"/>
</dbReference>
<dbReference type="Gene3D" id="1.10.10.10">
    <property type="entry name" value="Winged helix-like DNA-binding domain superfamily/Winged helix DNA-binding domain"/>
    <property type="match status" value="1"/>
</dbReference>
<dbReference type="HAMAP" id="MF_00772">
    <property type="entry name" value="OGT"/>
    <property type="match status" value="1"/>
</dbReference>
<dbReference type="InterPro" id="IPR001497">
    <property type="entry name" value="MethylDNA_cys_MeTrfase_AS"/>
</dbReference>
<dbReference type="InterPro" id="IPR014048">
    <property type="entry name" value="MethylDNA_cys_MeTrfase_DNA-bd"/>
</dbReference>
<dbReference type="InterPro" id="IPR036217">
    <property type="entry name" value="MethylDNA_cys_MeTrfase_DNAb"/>
</dbReference>
<dbReference type="InterPro" id="IPR008332">
    <property type="entry name" value="MethylG_MeTrfase_N"/>
</dbReference>
<dbReference type="InterPro" id="IPR023546">
    <property type="entry name" value="MGMT"/>
</dbReference>
<dbReference type="InterPro" id="IPR036631">
    <property type="entry name" value="MGMT_N_sf"/>
</dbReference>
<dbReference type="InterPro" id="IPR036388">
    <property type="entry name" value="WH-like_DNA-bd_sf"/>
</dbReference>
<dbReference type="NCBIfam" id="TIGR00589">
    <property type="entry name" value="ogt"/>
    <property type="match status" value="1"/>
</dbReference>
<dbReference type="PANTHER" id="PTHR10815">
    <property type="entry name" value="METHYLATED-DNA--PROTEIN-CYSTEINE METHYLTRANSFERASE"/>
    <property type="match status" value="1"/>
</dbReference>
<dbReference type="PANTHER" id="PTHR10815:SF13">
    <property type="entry name" value="METHYLATED-DNA--PROTEIN-CYSTEINE METHYLTRANSFERASE"/>
    <property type="match status" value="1"/>
</dbReference>
<dbReference type="Pfam" id="PF01035">
    <property type="entry name" value="DNA_binding_1"/>
    <property type="match status" value="1"/>
</dbReference>
<dbReference type="Pfam" id="PF02870">
    <property type="entry name" value="Methyltransf_1N"/>
    <property type="match status" value="1"/>
</dbReference>
<dbReference type="SUPFAM" id="SSF53155">
    <property type="entry name" value="Methylated DNA-protein cysteine methyltransferase domain"/>
    <property type="match status" value="1"/>
</dbReference>
<dbReference type="SUPFAM" id="SSF46767">
    <property type="entry name" value="Methylated DNA-protein cysteine methyltransferase, C-terminal domain"/>
    <property type="match status" value="1"/>
</dbReference>
<dbReference type="PROSITE" id="PS00374">
    <property type="entry name" value="MGMT"/>
    <property type="match status" value="1"/>
</dbReference>
<sequence>MLVYGLYKSPLGYITVAKDDKGFIMLDFCDCVEGNSRDDSSFTEFFHKLDLYFEGKPINLREPINLKTYPFRLSVFKEVMKIPWGKVMPYKQIADSLGTSPRAVGMALSKNPILLIIPCHRVIAENGIGGYSRGVKLKRALLELEGVKIPE</sequence>
<name>OGT_SACI1</name>
<reference key="1">
    <citation type="journal article" date="2009" name="Proc. Natl. Acad. Sci. U.S.A.">
        <title>Biogeography of the Sulfolobus islandicus pan-genome.</title>
        <authorList>
            <person name="Reno M.L."/>
            <person name="Held N.L."/>
            <person name="Fields C.J."/>
            <person name="Burke P.V."/>
            <person name="Whitaker R.J."/>
        </authorList>
    </citation>
    <scope>NUCLEOTIDE SEQUENCE [LARGE SCALE GENOMIC DNA]</scope>
    <source>
        <strain>Y.N.15.51 / Yellowstone #2</strain>
    </source>
</reference>
<evidence type="ECO:0000255" key="1">
    <source>
        <dbReference type="HAMAP-Rule" id="MF_00772"/>
    </source>
</evidence>